<feature type="chain" id="PRO_0000235326" description="Late cornified envelope protein 1C">
    <location>
        <begin position="1"/>
        <end position="118"/>
    </location>
</feature>
<feature type="region of interest" description="Disordered" evidence="1">
    <location>
        <begin position="1"/>
        <end position="23"/>
    </location>
</feature>
<feature type="region of interest" description="Disordered" evidence="1">
    <location>
        <begin position="87"/>
        <end position="118"/>
    </location>
</feature>
<feature type="compositionally biased region" description="Low complexity" evidence="1">
    <location>
        <begin position="1"/>
        <end position="10"/>
    </location>
</feature>
<feature type="compositionally biased region" description="Pro residues" evidence="1">
    <location>
        <begin position="11"/>
        <end position="23"/>
    </location>
</feature>
<feature type="compositionally biased region" description="Low complexity" evidence="1">
    <location>
        <begin position="90"/>
        <end position="103"/>
    </location>
</feature>
<feature type="compositionally biased region" description="Gly residues" evidence="1">
    <location>
        <begin position="104"/>
        <end position="118"/>
    </location>
</feature>
<feature type="sequence variant" id="VAR_053481" description="In dbSNP:rs2006940.">
    <original>C</original>
    <variation>Y</variation>
    <location>
        <position position="16"/>
    </location>
</feature>
<protein>
    <recommendedName>
        <fullName>Late cornified envelope protein 1C</fullName>
    </recommendedName>
    <alternativeName>
        <fullName>Late envelope protein 3</fullName>
    </alternativeName>
</protein>
<dbReference type="EMBL" id="AL353779">
    <property type="status" value="NOT_ANNOTATED_CDS"/>
    <property type="molecule type" value="Genomic_DNA"/>
</dbReference>
<dbReference type="CCDS" id="CCDS1026.1"/>
<dbReference type="RefSeq" id="NP_848128.1">
    <property type="nucleotide sequence ID" value="NM_178351.4"/>
</dbReference>
<dbReference type="BioGRID" id="131640">
    <property type="interactions" value="76"/>
</dbReference>
<dbReference type="FunCoup" id="Q5T751">
    <property type="interactions" value="29"/>
</dbReference>
<dbReference type="IntAct" id="Q5T751">
    <property type="interactions" value="66"/>
</dbReference>
<dbReference type="STRING" id="9606.ENSP00000475270"/>
<dbReference type="GlyGen" id="Q5T751">
    <property type="glycosylation" value="1 site, 1 O-linked glycan (1 site)"/>
</dbReference>
<dbReference type="iPTMnet" id="Q5T751"/>
<dbReference type="PhosphoSitePlus" id="Q5T751"/>
<dbReference type="BioMuta" id="LCE1C"/>
<dbReference type="DMDM" id="74745321"/>
<dbReference type="MassIVE" id="Q5T751"/>
<dbReference type="PaxDb" id="9606-ENSP00000475270"/>
<dbReference type="PeptideAtlas" id="Q5T751"/>
<dbReference type="Pumba" id="Q5T751"/>
<dbReference type="DNASU" id="353133"/>
<dbReference type="Ensembl" id="ENST00000607093.2">
    <property type="protein sequence ID" value="ENSP00000475270.1"/>
    <property type="gene ID" value="ENSG00000197084.6"/>
</dbReference>
<dbReference type="GeneID" id="353133"/>
<dbReference type="KEGG" id="hsa:353133"/>
<dbReference type="MANE-Select" id="ENST00000607093.2">
    <property type="protein sequence ID" value="ENSP00000475270.1"/>
    <property type="RefSeq nucleotide sequence ID" value="NM_178351.4"/>
    <property type="RefSeq protein sequence ID" value="NP_848128.1"/>
</dbReference>
<dbReference type="UCSC" id="uc031uzj.2">
    <property type="organism name" value="human"/>
</dbReference>
<dbReference type="AGR" id="HGNC:29464"/>
<dbReference type="CTD" id="353133"/>
<dbReference type="DisGeNET" id="353133"/>
<dbReference type="GeneCards" id="LCE1C"/>
<dbReference type="HGNC" id="HGNC:29464">
    <property type="gene designation" value="LCE1C"/>
</dbReference>
<dbReference type="HPA" id="ENSG00000197084">
    <property type="expression patterns" value="Tissue enriched (skin)"/>
</dbReference>
<dbReference type="MIM" id="612605">
    <property type="type" value="gene"/>
</dbReference>
<dbReference type="neXtProt" id="NX_Q5T751"/>
<dbReference type="OpenTargets" id="ENSG00000197084"/>
<dbReference type="PharmGKB" id="PA134895875"/>
<dbReference type="VEuPathDB" id="HostDB:ENSG00000197084"/>
<dbReference type="GeneTree" id="ENSGT00950000183278"/>
<dbReference type="HOGENOM" id="CLU_152038_0_0_1"/>
<dbReference type="InParanoid" id="Q5T751"/>
<dbReference type="OMA" id="PTEMSCQ"/>
<dbReference type="PAN-GO" id="Q5T751">
    <property type="GO annotations" value="0 GO annotations based on evolutionary models"/>
</dbReference>
<dbReference type="PathwayCommons" id="Q5T751"/>
<dbReference type="Reactome" id="R-HSA-6809371">
    <property type="pathway name" value="Formation of the cornified envelope"/>
</dbReference>
<dbReference type="SignaLink" id="Q5T751"/>
<dbReference type="BioGRID-ORCS" id="353133">
    <property type="hits" value="373 hits in 1046 CRISPR screens"/>
</dbReference>
<dbReference type="GenomeRNAi" id="353133"/>
<dbReference type="Pharos" id="Q5T751">
    <property type="development level" value="Tdark"/>
</dbReference>
<dbReference type="PRO" id="PR:Q5T751"/>
<dbReference type="Proteomes" id="UP000005640">
    <property type="component" value="Chromosome 1"/>
</dbReference>
<dbReference type="RNAct" id="Q5T751">
    <property type="molecule type" value="protein"/>
</dbReference>
<dbReference type="Bgee" id="ENSG00000197084">
    <property type="expression patterns" value="Expressed in skin of leg and 63 other cell types or tissues"/>
</dbReference>
<dbReference type="ExpressionAtlas" id="Q5T751">
    <property type="expression patterns" value="baseline and differential"/>
</dbReference>
<dbReference type="GO" id="GO:0031424">
    <property type="term" value="P:keratinization"/>
    <property type="evidence" value="ECO:0007669"/>
    <property type="project" value="UniProtKB-KW"/>
</dbReference>
<dbReference type="InterPro" id="IPR028205">
    <property type="entry name" value="LCE"/>
</dbReference>
<dbReference type="Pfam" id="PF14672">
    <property type="entry name" value="LCE"/>
    <property type="match status" value="3"/>
</dbReference>
<dbReference type="PRINTS" id="PR00021">
    <property type="entry name" value="PRORICH"/>
</dbReference>
<accession>Q5T751</accession>
<gene>
    <name type="primary">LCE1C</name>
    <name type="synonym">LEP3</name>
</gene>
<sequence>MSCQQSQQQCQPPPKCTPKCPPKCPTPKCPPKCPPKCPPVSSCCSVSSGGCCGSSSGGSCGSSSGGCCSSGGGGCCLSHHRRRRSHCHRPQSSGCCSQPSGGSSCCGGGSGQHSGGCC</sequence>
<organism>
    <name type="scientific">Homo sapiens</name>
    <name type="common">Human</name>
    <dbReference type="NCBI Taxonomy" id="9606"/>
    <lineage>
        <taxon>Eukaryota</taxon>
        <taxon>Metazoa</taxon>
        <taxon>Chordata</taxon>
        <taxon>Craniata</taxon>
        <taxon>Vertebrata</taxon>
        <taxon>Euteleostomi</taxon>
        <taxon>Mammalia</taxon>
        <taxon>Eutheria</taxon>
        <taxon>Euarchontoglires</taxon>
        <taxon>Primates</taxon>
        <taxon>Haplorrhini</taxon>
        <taxon>Catarrhini</taxon>
        <taxon>Hominidae</taxon>
        <taxon>Homo</taxon>
    </lineage>
</organism>
<keyword id="KW-0417">Keratinization</keyword>
<keyword id="KW-1185">Reference proteome</keyword>
<name>LCE1C_HUMAN</name>
<evidence type="ECO:0000256" key="1">
    <source>
        <dbReference type="SAM" id="MobiDB-lite"/>
    </source>
</evidence>
<evidence type="ECO:0000269" key="2">
    <source>
    </source>
</evidence>
<evidence type="ECO:0000269" key="3">
    <source>
    </source>
</evidence>
<evidence type="ECO:0000305" key="4"/>
<proteinExistence type="evidence at protein level"/>
<reference key="1">
    <citation type="journal article" date="2006" name="Nature">
        <title>The DNA sequence and biological annotation of human chromosome 1.</title>
        <authorList>
            <person name="Gregory S.G."/>
            <person name="Barlow K.F."/>
            <person name="McLay K.E."/>
            <person name="Kaul R."/>
            <person name="Swarbreck D."/>
            <person name="Dunham A."/>
            <person name="Scott C.E."/>
            <person name="Howe K.L."/>
            <person name="Woodfine K."/>
            <person name="Spencer C.C.A."/>
            <person name="Jones M.C."/>
            <person name="Gillson C."/>
            <person name="Searle S."/>
            <person name="Zhou Y."/>
            <person name="Kokocinski F."/>
            <person name="McDonald L."/>
            <person name="Evans R."/>
            <person name="Phillips K."/>
            <person name="Atkinson A."/>
            <person name="Cooper R."/>
            <person name="Jones C."/>
            <person name="Hall R.E."/>
            <person name="Andrews T.D."/>
            <person name="Lloyd C."/>
            <person name="Ainscough R."/>
            <person name="Almeida J.P."/>
            <person name="Ambrose K.D."/>
            <person name="Anderson F."/>
            <person name="Andrew R.W."/>
            <person name="Ashwell R.I.S."/>
            <person name="Aubin K."/>
            <person name="Babbage A.K."/>
            <person name="Bagguley C.L."/>
            <person name="Bailey J."/>
            <person name="Beasley H."/>
            <person name="Bethel G."/>
            <person name="Bird C.P."/>
            <person name="Bray-Allen S."/>
            <person name="Brown J.Y."/>
            <person name="Brown A.J."/>
            <person name="Buckley D."/>
            <person name="Burton J."/>
            <person name="Bye J."/>
            <person name="Carder C."/>
            <person name="Chapman J.C."/>
            <person name="Clark S.Y."/>
            <person name="Clarke G."/>
            <person name="Clee C."/>
            <person name="Cobley V."/>
            <person name="Collier R.E."/>
            <person name="Corby N."/>
            <person name="Coville G.J."/>
            <person name="Davies J."/>
            <person name="Deadman R."/>
            <person name="Dunn M."/>
            <person name="Earthrowl M."/>
            <person name="Ellington A.G."/>
            <person name="Errington H."/>
            <person name="Frankish A."/>
            <person name="Frankland J."/>
            <person name="French L."/>
            <person name="Garner P."/>
            <person name="Garnett J."/>
            <person name="Gay L."/>
            <person name="Ghori M.R.J."/>
            <person name="Gibson R."/>
            <person name="Gilby L.M."/>
            <person name="Gillett W."/>
            <person name="Glithero R.J."/>
            <person name="Grafham D.V."/>
            <person name="Griffiths C."/>
            <person name="Griffiths-Jones S."/>
            <person name="Grocock R."/>
            <person name="Hammond S."/>
            <person name="Harrison E.S.I."/>
            <person name="Hart E."/>
            <person name="Haugen E."/>
            <person name="Heath P.D."/>
            <person name="Holmes S."/>
            <person name="Holt K."/>
            <person name="Howden P.J."/>
            <person name="Hunt A.R."/>
            <person name="Hunt S.E."/>
            <person name="Hunter G."/>
            <person name="Isherwood J."/>
            <person name="James R."/>
            <person name="Johnson C."/>
            <person name="Johnson D."/>
            <person name="Joy A."/>
            <person name="Kay M."/>
            <person name="Kershaw J.K."/>
            <person name="Kibukawa M."/>
            <person name="Kimberley A.M."/>
            <person name="King A."/>
            <person name="Knights A.J."/>
            <person name="Lad H."/>
            <person name="Laird G."/>
            <person name="Lawlor S."/>
            <person name="Leongamornlert D.A."/>
            <person name="Lloyd D.M."/>
            <person name="Loveland J."/>
            <person name="Lovell J."/>
            <person name="Lush M.J."/>
            <person name="Lyne R."/>
            <person name="Martin S."/>
            <person name="Mashreghi-Mohammadi M."/>
            <person name="Matthews L."/>
            <person name="Matthews N.S.W."/>
            <person name="McLaren S."/>
            <person name="Milne S."/>
            <person name="Mistry S."/>
            <person name="Moore M.J.F."/>
            <person name="Nickerson T."/>
            <person name="O'Dell C.N."/>
            <person name="Oliver K."/>
            <person name="Palmeiri A."/>
            <person name="Palmer S.A."/>
            <person name="Parker A."/>
            <person name="Patel D."/>
            <person name="Pearce A.V."/>
            <person name="Peck A.I."/>
            <person name="Pelan S."/>
            <person name="Phelps K."/>
            <person name="Phillimore B.J."/>
            <person name="Plumb R."/>
            <person name="Rajan J."/>
            <person name="Raymond C."/>
            <person name="Rouse G."/>
            <person name="Saenphimmachak C."/>
            <person name="Sehra H.K."/>
            <person name="Sheridan E."/>
            <person name="Shownkeen R."/>
            <person name="Sims S."/>
            <person name="Skuce C.D."/>
            <person name="Smith M."/>
            <person name="Steward C."/>
            <person name="Subramanian S."/>
            <person name="Sycamore N."/>
            <person name="Tracey A."/>
            <person name="Tromans A."/>
            <person name="Van Helmond Z."/>
            <person name="Wall M."/>
            <person name="Wallis J.M."/>
            <person name="White S."/>
            <person name="Whitehead S.L."/>
            <person name="Wilkinson J.E."/>
            <person name="Willey D.L."/>
            <person name="Williams H."/>
            <person name="Wilming L."/>
            <person name="Wray P.W."/>
            <person name="Wu Z."/>
            <person name="Coulson A."/>
            <person name="Vaudin M."/>
            <person name="Sulston J.E."/>
            <person name="Durbin R.M."/>
            <person name="Hubbard T."/>
            <person name="Wooster R."/>
            <person name="Dunham I."/>
            <person name="Carter N.P."/>
            <person name="McVean G."/>
            <person name="Ross M.T."/>
            <person name="Harrow J."/>
            <person name="Olson M.V."/>
            <person name="Beck S."/>
            <person name="Rogers J."/>
            <person name="Bentley D.R."/>
        </authorList>
    </citation>
    <scope>NUCLEOTIDE SEQUENCE [LARGE SCALE GENOMIC DNA]</scope>
</reference>
<reference key="2">
    <citation type="journal article" date="2005" name="J. Invest. Dermatol.">
        <title>Late cornified envelope family in differentiating epithelia -- response to calcium and ultraviolet irradiation.</title>
        <authorList>
            <person name="Jackson B."/>
            <person name="Tilli C.L."/>
            <person name="Hardman M."/>
            <person name="Avilion A."/>
            <person name="Macleod M."/>
            <person name="Ashcroft G."/>
            <person name="Byrne C."/>
        </authorList>
    </citation>
    <scope>NOMENCLATURE</scope>
    <scope>TISSUE SPECIFICITY</scope>
    <scope>INDUCTION BY UVB</scope>
</reference>
<reference key="3">
    <citation type="journal article" date="2023" name="J. Invest. Dermatol.">
        <title>CYSRT1: An Antimicrobial Epidermal Protein that Can Interact with Late Cornified Envelope Proteins.</title>
        <authorList>
            <person name="Niehues H."/>
            <person name="Rikken G."/>
            <person name="Kersten F.F.J."/>
            <person name="Eeftens J.M."/>
            <person name="van Vlijmen-Willems I.M.J.J."/>
            <person name="Rodijk-Olthuis D."/>
            <person name="Jansen P.A.M."/>
            <person name="Hendriks W.J.A.J."/>
            <person name="Ederveen T.H.A."/>
            <person name="Schalkwijk J."/>
            <person name="van den Bogaard E.H."/>
            <person name="Zeeuwen P.L.J.M."/>
        </authorList>
    </citation>
    <scope>INTERACTION WITH CYSRT1</scope>
</reference>
<comment type="function">
    <text>Precursors of the cornified envelope of the stratum corneum.</text>
</comment>
<comment type="subunit">
    <text evidence="3">Interacts with CYSRT1.</text>
</comment>
<comment type="interaction">
    <interactant intactId="EBI-12224199">
        <id>Q5T751</id>
    </interactant>
    <interactant intactId="EBI-10173507">
        <id>Q6UY14-3</id>
        <label>ADAMTSL4</label>
    </interactant>
    <organismsDiffer>false</organismsDiffer>
    <experiments>3</experiments>
</comment>
<comment type="interaction">
    <interactant intactId="EBI-12224199">
        <id>Q5T751</id>
    </interactant>
    <interactant intactId="EBI-741528">
        <id>Q9UKJ5</id>
        <label>CHIC2</label>
    </interactant>
    <organismsDiffer>false</organismsDiffer>
    <experiments>3</experiments>
</comment>
<comment type="interaction">
    <interactant intactId="EBI-12224199">
        <id>Q5T751</id>
    </interactant>
    <interactant intactId="EBI-947551">
        <id>Q9H2X0</id>
        <label>CHRD</label>
    </interactant>
    <organismsDiffer>false</organismsDiffer>
    <experiments>3</experiments>
</comment>
<comment type="interaction">
    <interactant intactId="EBI-12224199">
        <id>Q5T751</id>
    </interactant>
    <interactant intactId="EBI-713677">
        <id>Q9UGL9</id>
        <label>CRCT1</label>
    </interactant>
    <organismsDiffer>false</organismsDiffer>
    <experiments>3</experiments>
</comment>
<comment type="interaction">
    <interactant intactId="EBI-12224199">
        <id>Q5T751</id>
    </interactant>
    <interactant intactId="EBI-10192698">
        <id>Q02930-3</id>
        <label>CREB5</label>
    </interactant>
    <organismsDiffer>false</organismsDiffer>
    <experiments>3</experiments>
</comment>
<comment type="interaction">
    <interactant intactId="EBI-12224199">
        <id>Q5T751</id>
    </interactant>
    <interactant intactId="EBI-3867333">
        <id>A8MQ03</id>
        <label>CYSRT1</label>
    </interactant>
    <organismsDiffer>false</organismsDiffer>
    <experiments>3</experiments>
</comment>
<comment type="interaction">
    <interactant intactId="EBI-12224199">
        <id>Q5T751</id>
    </interactant>
    <interactant intactId="EBI-536772">
        <id>Q12805</id>
        <label>EFEMP1</label>
    </interactant>
    <organismsDiffer>false</organismsDiffer>
    <experiments>3</experiments>
</comment>
<comment type="interaction">
    <interactant intactId="EBI-12224199">
        <id>Q5T751</id>
    </interactant>
    <interactant intactId="EBI-743414">
        <id>O95967</id>
        <label>EFEMP2</label>
    </interactant>
    <organismsDiffer>false</organismsDiffer>
    <experiments>3</experiments>
</comment>
<comment type="interaction">
    <interactant intactId="EBI-12224199">
        <id>Q5T751</id>
    </interactant>
    <interactant intactId="EBI-11956479">
        <id>P23142-4</id>
        <label>FBLN1</label>
    </interactant>
    <organismsDiffer>false</organismsDiffer>
    <experiments>3</experiments>
</comment>
<comment type="interaction">
    <interactant intactId="EBI-12224199">
        <id>Q5T751</id>
    </interactant>
    <interactant intactId="EBI-11978177">
        <id>Q96NT3-2</id>
        <label>GUCD1</label>
    </interactant>
    <organismsDiffer>false</organismsDiffer>
    <experiments>3</experiments>
</comment>
<comment type="interaction">
    <interactant intactId="EBI-12224199">
        <id>Q5T751</id>
    </interactant>
    <interactant intactId="EBI-740785">
        <id>P49639</id>
        <label>HOXA1</label>
    </interactant>
    <organismsDiffer>false</organismsDiffer>
    <experiments>3</experiments>
</comment>
<comment type="interaction">
    <interactant intactId="EBI-12224199">
        <id>Q5T751</id>
    </interactant>
    <interactant intactId="EBI-10172150">
        <id>P60370</id>
        <label>KRTAP10-5</label>
    </interactant>
    <organismsDiffer>false</organismsDiffer>
    <experiments>5</experiments>
</comment>
<comment type="interaction">
    <interactant intactId="EBI-12224199">
        <id>Q5T751</id>
    </interactant>
    <interactant intactId="EBI-10171774">
        <id>P60410</id>
        <label>KRTAP10-8</label>
    </interactant>
    <organismsDiffer>false</organismsDiffer>
    <experiments>3</experiments>
</comment>
<comment type="interaction">
    <interactant intactId="EBI-12224199">
        <id>Q5T751</id>
    </interactant>
    <interactant intactId="EBI-10210845">
        <id>P59990</id>
        <label>KRTAP12-1</label>
    </interactant>
    <organismsDiffer>false</organismsDiffer>
    <experiments>3</experiments>
</comment>
<comment type="interaction">
    <interactant intactId="EBI-12224199">
        <id>Q5T751</id>
    </interactant>
    <interactant intactId="EBI-10176379">
        <id>P59991</id>
        <label>KRTAP12-2</label>
    </interactant>
    <organismsDiffer>false</organismsDiffer>
    <experiments>3</experiments>
</comment>
<comment type="interaction">
    <interactant intactId="EBI-12224199">
        <id>Q5T751</id>
    </interactant>
    <interactant intactId="EBI-11953334">
        <id>P60328</id>
        <label>KRTAP12-3</label>
    </interactant>
    <organismsDiffer>false</organismsDiffer>
    <experiments>3</experiments>
</comment>
<comment type="interaction">
    <interactant intactId="EBI-12224199">
        <id>Q5T751</id>
    </interactant>
    <interactant intactId="EBI-10176396">
        <id>P60329</id>
        <label>KRTAP12-4</label>
    </interactant>
    <organismsDiffer>false</organismsDiffer>
    <experiments>3</experiments>
</comment>
<comment type="interaction">
    <interactant intactId="EBI-12224199">
        <id>Q5T751</id>
    </interactant>
    <interactant intactId="EBI-10302392">
        <id>Q9BYQ6</id>
        <label>KRTAP4-11</label>
    </interactant>
    <organismsDiffer>false</organismsDiffer>
    <experiments>5</experiments>
</comment>
<comment type="interaction">
    <interactant intactId="EBI-12224199">
        <id>Q5T751</id>
    </interactant>
    <interactant intactId="EBI-739863">
        <id>Q9BQ66</id>
        <label>KRTAP4-12</label>
    </interactant>
    <organismsDiffer>false</organismsDiffer>
    <experiments>3</experiments>
</comment>
<comment type="interaction">
    <interactant intactId="EBI-12224199">
        <id>Q5T751</id>
    </interactant>
    <interactant intactId="EBI-10172511">
        <id>Q9BYR5</id>
        <label>KRTAP4-2</label>
    </interactant>
    <organismsDiffer>false</organismsDiffer>
    <experiments>3</experiments>
</comment>
<comment type="interaction">
    <interactant intactId="EBI-12224199">
        <id>Q5T751</id>
    </interactant>
    <interactant intactId="EBI-11958132">
        <id>Q9BYR3</id>
        <label>KRTAP4-4</label>
    </interactant>
    <organismsDiffer>false</organismsDiffer>
    <experiments>3</experiments>
</comment>
<comment type="interaction">
    <interactant intactId="EBI-12224199">
        <id>Q5T751</id>
    </interactant>
    <interactant intactId="EBI-11993254">
        <id>Q9BYR2</id>
        <label>KRTAP4-5</label>
    </interactant>
    <organismsDiffer>false</organismsDiffer>
    <experiments>5</experiments>
</comment>
<comment type="interaction">
    <interactant intactId="EBI-12224199">
        <id>Q5T751</id>
    </interactant>
    <interactant intactId="EBI-11993296">
        <id>Q6L8G4</id>
        <label>KRTAP5-11</label>
    </interactant>
    <organismsDiffer>false</organismsDiffer>
    <experiments>3</experiments>
</comment>
<comment type="interaction">
    <interactant intactId="EBI-12224199">
        <id>Q5T751</id>
    </interactant>
    <interactant intactId="EBI-11958178">
        <id>Q701N4</id>
        <label>KRTAP5-2</label>
    </interactant>
    <organismsDiffer>false</organismsDiffer>
    <experiments>3</experiments>
</comment>
<comment type="interaction">
    <interactant intactId="EBI-12224199">
        <id>Q5T751</id>
    </interactant>
    <interactant intactId="EBI-11974251">
        <id>Q6L8H2</id>
        <label>KRTAP5-3</label>
    </interactant>
    <organismsDiffer>false</organismsDiffer>
    <experiments>3</experiments>
</comment>
<comment type="interaction">
    <interactant intactId="EBI-12224199">
        <id>Q5T751</id>
    </interactant>
    <interactant intactId="EBI-11963072">
        <id>Q6L8H1</id>
        <label>KRTAP5-4</label>
    </interactant>
    <organismsDiffer>false</organismsDiffer>
    <experiments>3</experiments>
</comment>
<comment type="interaction">
    <interactant intactId="EBI-12224199">
        <id>Q5T751</id>
    </interactant>
    <interactant intactId="EBI-10250562">
        <id>Q6L8G9</id>
        <label>KRTAP5-6</label>
    </interactant>
    <organismsDiffer>false</organismsDiffer>
    <experiments>3</experiments>
</comment>
<comment type="interaction">
    <interactant intactId="EBI-12224199">
        <id>Q5T751</id>
    </interactant>
    <interactant intactId="EBI-3958099">
        <id>P26371</id>
        <label>KRTAP5-9</label>
    </interactant>
    <organismsDiffer>false</organismsDiffer>
    <experiments>3</experiments>
</comment>
<comment type="interaction">
    <interactant intactId="EBI-12224199">
        <id>Q5T751</id>
    </interactant>
    <interactant intactId="EBI-22311199">
        <id>Q3LI67</id>
        <label>KRTAP6-3</label>
    </interactant>
    <organismsDiffer>false</organismsDiffer>
    <experiments>3</experiments>
</comment>
<comment type="interaction">
    <interactant intactId="EBI-12224199">
        <id>Q5T751</id>
    </interactant>
    <interactant intactId="EBI-1043191">
        <id>Q9BYQ3</id>
        <label>KRTAP9-3</label>
    </interactant>
    <organismsDiffer>false</organismsDiffer>
    <experiments>3</experiments>
</comment>
<comment type="interaction">
    <interactant intactId="EBI-12224199">
        <id>Q5T751</id>
    </interactant>
    <interactant intactId="EBI-11958364">
        <id>Q9BYQ0</id>
        <label>KRTAP9-8</label>
    </interactant>
    <organismsDiffer>false</organismsDiffer>
    <experiments>3</experiments>
</comment>
<comment type="interaction">
    <interactant intactId="EBI-12224199">
        <id>Q5T751</id>
    </interactant>
    <interactant intactId="EBI-11962058">
        <id>Q5T7P2</id>
        <label>LCE1A</label>
    </interactant>
    <organismsDiffer>false</organismsDiffer>
    <experiments>3</experiments>
</comment>
<comment type="interaction">
    <interactant intactId="EBI-12224199">
        <id>Q5T751</id>
    </interactant>
    <interactant intactId="EBI-10245913">
        <id>Q5T7P3</id>
        <label>LCE1B</label>
    </interactant>
    <organismsDiffer>false</organismsDiffer>
    <experiments>3</experiments>
</comment>
<comment type="interaction">
    <interactant intactId="EBI-12224199">
        <id>Q5T751</id>
    </interactant>
    <interactant intactId="EBI-11741311">
        <id>Q5T752</id>
        <label>LCE1D</label>
    </interactant>
    <organismsDiffer>false</organismsDiffer>
    <experiments>3</experiments>
</comment>
<comment type="interaction">
    <interactant intactId="EBI-12224199">
        <id>Q5T751</id>
    </interactant>
    <interactant intactId="EBI-11958008">
        <id>Q5T754</id>
        <label>LCE1F</label>
    </interactant>
    <organismsDiffer>false</organismsDiffer>
    <experiments>3</experiments>
</comment>
<comment type="interaction">
    <interactant intactId="EBI-12224199">
        <id>Q5T751</id>
    </interactant>
    <interactant intactId="EBI-10246607">
        <id>Q5TA79</id>
        <label>LCE2A</label>
    </interactant>
    <organismsDiffer>false</organismsDiffer>
    <experiments>3</experiments>
</comment>
<comment type="interaction">
    <interactant intactId="EBI-12224199">
        <id>Q5T751</id>
    </interactant>
    <interactant intactId="EBI-11478468">
        <id>O14633</id>
        <label>LCE2B</label>
    </interactant>
    <organismsDiffer>false</organismsDiffer>
    <experiments>3</experiments>
</comment>
<comment type="interaction">
    <interactant intactId="EBI-12224199">
        <id>Q5T751</id>
    </interactant>
    <interactant intactId="EBI-11973993">
        <id>Q5TA81</id>
        <label>LCE2C</label>
    </interactant>
    <organismsDiffer>false</organismsDiffer>
    <experiments>3</experiments>
</comment>
<comment type="interaction">
    <interactant intactId="EBI-12224199">
        <id>Q5T751</id>
    </interactant>
    <interactant intactId="EBI-10246750">
        <id>Q5TA82</id>
        <label>LCE2D</label>
    </interactant>
    <organismsDiffer>false</organismsDiffer>
    <experiments>3</experiments>
</comment>
<comment type="interaction">
    <interactant intactId="EBI-12224199">
        <id>Q5T751</id>
    </interactant>
    <interactant intactId="EBI-9394625">
        <id>Q5TA76</id>
        <label>LCE3A</label>
    </interactant>
    <organismsDiffer>false</organismsDiffer>
    <experiments>3</experiments>
</comment>
<comment type="interaction">
    <interactant intactId="EBI-12224199">
        <id>Q5T751</id>
    </interactant>
    <interactant intactId="EBI-11974495">
        <id>Q5TA77</id>
        <label>LCE3B</label>
    </interactant>
    <organismsDiffer>false</organismsDiffer>
    <experiments>3</experiments>
</comment>
<comment type="interaction">
    <interactant intactId="EBI-12224199">
        <id>Q5T751</id>
    </interactant>
    <interactant intactId="EBI-10246358">
        <id>Q5TA78</id>
        <label>LCE4A</label>
    </interactant>
    <organismsDiffer>false</organismsDiffer>
    <experiments>3</experiments>
</comment>
<comment type="interaction">
    <interactant intactId="EBI-12224199">
        <id>Q5T751</id>
    </interactant>
    <interactant intactId="EBI-11955689">
        <id>Q5TCM9</id>
        <label>LCE5A</label>
    </interactant>
    <organismsDiffer>false</organismsDiffer>
    <experiments>3</experiments>
</comment>
<comment type="interaction">
    <interactant intactId="EBI-12224199">
        <id>Q5T751</id>
    </interactant>
    <interactant intactId="EBI-2683507">
        <id>Q8N5G2</id>
        <label>MACO1</label>
    </interactant>
    <organismsDiffer>false</organismsDiffer>
    <experiments>3</experiments>
</comment>
<comment type="interaction">
    <interactant intactId="EBI-12224199">
        <id>Q5T751</id>
    </interactant>
    <interactant intactId="EBI-6979889">
        <id>Q92692-2</id>
        <label>NECTIN2</label>
    </interactant>
    <organismsDiffer>false</organismsDiffer>
    <experiments>3</experiments>
</comment>
<comment type="interaction">
    <interactant intactId="EBI-12224199">
        <id>Q5T751</id>
    </interactant>
    <interactant intactId="EBI-741158">
        <id>Q96HA8</id>
        <label>NTAQ1</label>
    </interactant>
    <organismsDiffer>false</organismsDiffer>
    <experiments>3</experiments>
</comment>
<comment type="interaction">
    <interactant intactId="EBI-12224199">
        <id>Q5T751</id>
    </interactant>
    <interactant intactId="EBI-743459">
        <id>Q9HB63</id>
        <label>NTN4</label>
    </interactant>
    <organismsDiffer>false</organismsDiffer>
    <experiments>3</experiments>
</comment>
<comment type="interaction">
    <interactant intactId="EBI-12224199">
        <id>Q5T751</id>
    </interactant>
    <interactant intactId="EBI-591778">
        <id>P61970</id>
        <label>NUTF2</label>
    </interactant>
    <organismsDiffer>false</organismsDiffer>
    <experiments>3</experiments>
</comment>
<comment type="interaction">
    <interactant intactId="EBI-12224199">
        <id>Q5T751</id>
    </interactant>
    <interactant intactId="EBI-10234557">
        <id>Q14990</id>
        <label>ODF1</label>
    </interactant>
    <organismsDiffer>false</organismsDiffer>
    <experiments>3</experiments>
</comment>
<comment type="interaction">
    <interactant intactId="EBI-12224199">
        <id>Q5T751</id>
    </interactant>
    <interactant intactId="EBI-10277776">
        <id>Q8WWZ8</id>
        <label>OIT3</label>
    </interactant>
    <organismsDiffer>false</organismsDiffer>
    <experiments>3</experiments>
</comment>
<comment type="interaction">
    <interactant intactId="EBI-12224199">
        <id>Q5T751</id>
    </interactant>
    <interactant intactId="EBI-740446">
        <id>P32242</id>
        <label>OTX1</label>
    </interactant>
    <organismsDiffer>false</organismsDiffer>
    <experiments>3</experiments>
</comment>
<comment type="interaction">
    <interactant intactId="EBI-12224199">
        <id>Q5T751</id>
    </interactant>
    <interactant intactId="EBI-726466">
        <id>O15496</id>
        <label>PLA2G10</label>
    </interactant>
    <organismsDiffer>false</organismsDiffer>
    <experiments>3</experiments>
</comment>
<comment type="interaction">
    <interactant intactId="EBI-12224199">
        <id>Q5T751</id>
    </interactant>
    <interactant intactId="EBI-750734">
        <id>Q9NRY6</id>
        <label>PLSCR3</label>
    </interactant>
    <organismsDiffer>false</organismsDiffer>
    <experiments>3</experiments>
</comment>
<comment type="interaction">
    <interactant intactId="EBI-12224199">
        <id>Q5T751</id>
    </interactant>
    <interactant intactId="EBI-769257">
        <id>Q9NRQ2</id>
        <label>PLSCR4</label>
    </interactant>
    <organismsDiffer>false</organismsDiffer>
    <experiments>3</experiments>
</comment>
<comment type="interaction">
    <interactant intactId="EBI-12224199">
        <id>Q5T751</id>
    </interactant>
    <interactant intactId="EBI-17236143">
        <id>Q12837</id>
        <label>POU4F2</label>
    </interactant>
    <organismsDiffer>false</organismsDiffer>
    <experiments>3</experiments>
</comment>
<comment type="interaction">
    <interactant intactId="EBI-12224199">
        <id>Q5T751</id>
    </interactant>
    <interactant intactId="EBI-372273">
        <id>P20618</id>
        <label>PSMB1</label>
    </interactant>
    <organismsDiffer>false</organismsDiffer>
    <experiments>3</experiments>
</comment>
<comment type="interaction">
    <interactant intactId="EBI-12224199">
        <id>Q5T751</id>
    </interactant>
    <interactant intactId="EBI-1051105">
        <id>Q92504</id>
        <label>SLC39A7</label>
    </interactant>
    <organismsDiffer>false</organismsDiffer>
    <experiments>3</experiments>
</comment>
<comment type="interaction">
    <interactant intactId="EBI-12224199">
        <id>Q5T751</id>
    </interactant>
    <interactant intactId="EBI-7082156">
        <id>Q7Z698</id>
        <label>SPRED2</label>
    </interactant>
    <organismsDiffer>false</organismsDiffer>
    <experiments>3</experiments>
</comment>
<comment type="interaction">
    <interactant intactId="EBI-12224199">
        <id>Q5T751</id>
    </interactant>
    <interactant intactId="EBI-3866665">
        <id>O43609</id>
        <label>SPRY1</label>
    </interactant>
    <organismsDiffer>false</organismsDiffer>
    <experiments>3</experiments>
</comment>
<comment type="interaction">
    <interactant intactId="EBI-12224199">
        <id>Q5T751</id>
    </interactant>
    <interactant intactId="EBI-779636">
        <id>P01137</id>
        <label>TGFB1</label>
    </interactant>
    <organismsDiffer>false</organismsDiffer>
    <experiments>3</experiments>
</comment>
<comment type="interaction">
    <interactant intactId="EBI-12224199">
        <id>Q5T751</id>
    </interactant>
    <interactant intactId="EBI-5235829">
        <id>Q8IWZ5</id>
        <label>TRIM42</label>
    </interactant>
    <organismsDiffer>false</organismsDiffer>
    <experiments>3</experiments>
</comment>
<comment type="interaction">
    <interactant intactId="EBI-12224199">
        <id>Q5T751</id>
    </interactant>
    <interactant intactId="EBI-10249550">
        <id>Q6EMK4</id>
        <label>VASN</label>
    </interactant>
    <organismsDiffer>false</organismsDiffer>
    <experiments>3</experiments>
</comment>
<comment type="interaction">
    <interactant intactId="EBI-12224199">
        <id>Q5T751</id>
    </interactant>
    <interactant intactId="EBI-11957238">
        <id>Q2TAL6</id>
        <label>VWC2</label>
    </interactant>
    <organismsDiffer>false</organismsDiffer>
    <experiments>3</experiments>
</comment>
<comment type="interaction">
    <interactant intactId="EBI-12224199">
        <id>Q5T751</id>
    </interactant>
    <interactant intactId="EBI-11747707">
        <id>B2RUY7</id>
        <label>VWC2L</label>
    </interactant>
    <organismsDiffer>false</organismsDiffer>
    <experiments>3</experiments>
</comment>
<comment type="interaction">
    <interactant intactId="EBI-12224199">
        <id>Q5T751</id>
    </interactant>
    <interactant intactId="EBI-9088990">
        <id>Q7Z783</id>
    </interactant>
    <organismsDiffer>false</organismsDiffer>
    <experiments>3</experiments>
</comment>
<comment type="interaction">
    <interactant intactId="EBI-12224199">
        <id>Q5T751</id>
    </interactant>
    <interactant intactId="EBI-750454">
        <id>Q96EJ4</id>
    </interactant>
    <organismsDiffer>false</organismsDiffer>
    <experiments>3</experiments>
</comment>
<comment type="tissue specificity">
    <text evidence="2">Skin-specific. Expression was readily detected in adult trunk skin, adult arm skin, fetal skin, penal skin, vulva, esophagus and tongue. Not expressed in the cervix, rectum, lung, colon, or placenta.</text>
</comment>
<comment type="induction">
    <text evidence="2">By UVB.</text>
</comment>
<comment type="miscellaneous">
    <text>Belongs to the LCE cluster present on 1q21.</text>
</comment>
<comment type="similarity">
    <text evidence="4">Belongs to the LCE family.</text>
</comment>